<dbReference type="EMBL" id="AE000657">
    <property type="protein sequence ID" value="AAC07868.1"/>
    <property type="molecule type" value="Genomic_DNA"/>
</dbReference>
<dbReference type="PIR" id="E70484">
    <property type="entry name" value="E70484"/>
</dbReference>
<dbReference type="RefSeq" id="NP_214474.1">
    <property type="nucleotide sequence ID" value="NC_000918.1"/>
</dbReference>
<dbReference type="RefSeq" id="WP_010881410.1">
    <property type="nucleotide sequence ID" value="NC_000918.1"/>
</dbReference>
<dbReference type="SMR" id="O67905"/>
<dbReference type="FunCoup" id="O67905">
    <property type="interactions" value="426"/>
</dbReference>
<dbReference type="STRING" id="224324.aq_2150"/>
<dbReference type="EnsemblBacteria" id="AAC07868">
    <property type="protein sequence ID" value="AAC07868"/>
    <property type="gene ID" value="aq_2150"/>
</dbReference>
<dbReference type="KEGG" id="aae:aq_2150"/>
<dbReference type="PATRIC" id="fig|224324.8.peg.1662"/>
<dbReference type="eggNOG" id="COG0468">
    <property type="taxonomic scope" value="Bacteria"/>
</dbReference>
<dbReference type="HOGENOM" id="CLU_040469_1_2_0"/>
<dbReference type="InParanoid" id="O67905"/>
<dbReference type="OrthoDB" id="9776733at2"/>
<dbReference type="Proteomes" id="UP000000798">
    <property type="component" value="Chromosome"/>
</dbReference>
<dbReference type="GO" id="GO:0005737">
    <property type="term" value="C:cytoplasm"/>
    <property type="evidence" value="ECO:0007669"/>
    <property type="project" value="UniProtKB-SubCell"/>
</dbReference>
<dbReference type="GO" id="GO:0005524">
    <property type="term" value="F:ATP binding"/>
    <property type="evidence" value="ECO:0007669"/>
    <property type="project" value="UniProtKB-UniRule"/>
</dbReference>
<dbReference type="GO" id="GO:0016887">
    <property type="term" value="F:ATP hydrolysis activity"/>
    <property type="evidence" value="ECO:0007669"/>
    <property type="project" value="InterPro"/>
</dbReference>
<dbReference type="GO" id="GO:0140664">
    <property type="term" value="F:ATP-dependent DNA damage sensor activity"/>
    <property type="evidence" value="ECO:0007669"/>
    <property type="project" value="InterPro"/>
</dbReference>
<dbReference type="GO" id="GO:0003684">
    <property type="term" value="F:damaged DNA binding"/>
    <property type="evidence" value="ECO:0007669"/>
    <property type="project" value="UniProtKB-UniRule"/>
</dbReference>
<dbReference type="GO" id="GO:0003697">
    <property type="term" value="F:single-stranded DNA binding"/>
    <property type="evidence" value="ECO:0007669"/>
    <property type="project" value="UniProtKB-UniRule"/>
</dbReference>
<dbReference type="GO" id="GO:0006310">
    <property type="term" value="P:DNA recombination"/>
    <property type="evidence" value="ECO:0007669"/>
    <property type="project" value="UniProtKB-UniRule"/>
</dbReference>
<dbReference type="GO" id="GO:0006281">
    <property type="term" value="P:DNA repair"/>
    <property type="evidence" value="ECO:0007669"/>
    <property type="project" value="UniProtKB-UniRule"/>
</dbReference>
<dbReference type="GO" id="GO:0009432">
    <property type="term" value="P:SOS response"/>
    <property type="evidence" value="ECO:0007669"/>
    <property type="project" value="UniProtKB-UniRule"/>
</dbReference>
<dbReference type="CDD" id="cd00983">
    <property type="entry name" value="RecA"/>
    <property type="match status" value="1"/>
</dbReference>
<dbReference type="FunFam" id="3.40.50.300:FF:000087">
    <property type="entry name" value="Recombinase RecA"/>
    <property type="match status" value="1"/>
</dbReference>
<dbReference type="Gene3D" id="3.40.50.300">
    <property type="entry name" value="P-loop containing nucleotide triphosphate hydrolases"/>
    <property type="match status" value="1"/>
</dbReference>
<dbReference type="HAMAP" id="MF_00268">
    <property type="entry name" value="RecA"/>
    <property type="match status" value="1"/>
</dbReference>
<dbReference type="InterPro" id="IPR003593">
    <property type="entry name" value="AAA+_ATPase"/>
</dbReference>
<dbReference type="InterPro" id="IPR013765">
    <property type="entry name" value="DNA_recomb/repair_RecA"/>
</dbReference>
<dbReference type="InterPro" id="IPR020584">
    <property type="entry name" value="DNA_recomb/repair_RecA_CS"/>
</dbReference>
<dbReference type="InterPro" id="IPR027417">
    <property type="entry name" value="P-loop_NTPase"/>
</dbReference>
<dbReference type="InterPro" id="IPR049261">
    <property type="entry name" value="RecA-like_C"/>
</dbReference>
<dbReference type="InterPro" id="IPR049428">
    <property type="entry name" value="RecA-like_N"/>
</dbReference>
<dbReference type="InterPro" id="IPR020588">
    <property type="entry name" value="RecA_ATP-bd"/>
</dbReference>
<dbReference type="InterPro" id="IPR023400">
    <property type="entry name" value="RecA_C_sf"/>
</dbReference>
<dbReference type="InterPro" id="IPR020587">
    <property type="entry name" value="RecA_monomer-monomer_interface"/>
</dbReference>
<dbReference type="NCBIfam" id="TIGR02012">
    <property type="entry name" value="tigrfam_recA"/>
    <property type="match status" value="1"/>
</dbReference>
<dbReference type="PANTHER" id="PTHR45900:SF1">
    <property type="entry name" value="MITOCHONDRIAL DNA REPAIR PROTEIN RECA HOMOLOG-RELATED"/>
    <property type="match status" value="1"/>
</dbReference>
<dbReference type="PANTHER" id="PTHR45900">
    <property type="entry name" value="RECA"/>
    <property type="match status" value="1"/>
</dbReference>
<dbReference type="Pfam" id="PF00154">
    <property type="entry name" value="RecA"/>
    <property type="match status" value="1"/>
</dbReference>
<dbReference type="Pfam" id="PF21096">
    <property type="entry name" value="RecA_C"/>
    <property type="match status" value="1"/>
</dbReference>
<dbReference type="PRINTS" id="PR00142">
    <property type="entry name" value="RECA"/>
</dbReference>
<dbReference type="SMART" id="SM00382">
    <property type="entry name" value="AAA"/>
    <property type="match status" value="1"/>
</dbReference>
<dbReference type="SUPFAM" id="SSF52540">
    <property type="entry name" value="P-loop containing nucleoside triphosphate hydrolases"/>
    <property type="match status" value="1"/>
</dbReference>
<dbReference type="SUPFAM" id="SSF54752">
    <property type="entry name" value="RecA protein, C-terminal domain"/>
    <property type="match status" value="1"/>
</dbReference>
<dbReference type="PROSITE" id="PS00321">
    <property type="entry name" value="RECA_1"/>
    <property type="match status" value="1"/>
</dbReference>
<dbReference type="PROSITE" id="PS50162">
    <property type="entry name" value="RECA_2"/>
    <property type="match status" value="1"/>
</dbReference>
<dbReference type="PROSITE" id="PS50163">
    <property type="entry name" value="RECA_3"/>
    <property type="match status" value="1"/>
</dbReference>
<reference key="1">
    <citation type="journal article" date="1998" name="Nature">
        <title>The complete genome of the hyperthermophilic bacterium Aquifex aeolicus.</title>
        <authorList>
            <person name="Deckert G."/>
            <person name="Warren P.V."/>
            <person name="Gaasterland T."/>
            <person name="Young W.G."/>
            <person name="Lenox A.L."/>
            <person name="Graham D.E."/>
            <person name="Overbeek R."/>
            <person name="Snead M.A."/>
            <person name="Keller M."/>
            <person name="Aujay M."/>
            <person name="Huber R."/>
            <person name="Feldman R.A."/>
            <person name="Short J.M."/>
            <person name="Olsen G.J."/>
            <person name="Swanson R.V."/>
        </authorList>
    </citation>
    <scope>NUCLEOTIDE SEQUENCE [LARGE SCALE GENOMIC DNA]</scope>
    <source>
        <strain>VF5</strain>
    </source>
</reference>
<name>RECA_AQUAE</name>
<feature type="chain" id="PRO_0000122642" description="Protein RecA">
    <location>
        <begin position="1"/>
        <end position="345"/>
    </location>
</feature>
<feature type="binding site" evidence="1">
    <location>
        <begin position="68"/>
        <end position="75"/>
    </location>
    <ligand>
        <name>ATP</name>
        <dbReference type="ChEBI" id="CHEBI:30616"/>
    </ligand>
</feature>
<keyword id="KW-0067">ATP-binding</keyword>
<keyword id="KW-0963">Cytoplasm</keyword>
<keyword id="KW-0227">DNA damage</keyword>
<keyword id="KW-0233">DNA recombination</keyword>
<keyword id="KW-0234">DNA repair</keyword>
<keyword id="KW-0238">DNA-binding</keyword>
<keyword id="KW-0547">Nucleotide-binding</keyword>
<keyword id="KW-1185">Reference proteome</keyword>
<keyword id="KW-0742">SOS response</keyword>
<organism>
    <name type="scientific">Aquifex aeolicus (strain VF5)</name>
    <dbReference type="NCBI Taxonomy" id="224324"/>
    <lineage>
        <taxon>Bacteria</taxon>
        <taxon>Pseudomonadati</taxon>
        <taxon>Aquificota</taxon>
        <taxon>Aquificia</taxon>
        <taxon>Aquificales</taxon>
        <taxon>Aquificaceae</taxon>
        <taxon>Aquifex</taxon>
    </lineage>
</organism>
<gene>
    <name evidence="1" type="primary">recA</name>
    <name type="ordered locus">aq_2150</name>
</gene>
<proteinExistence type="inferred from homology"/>
<sequence>MSENLSEKKKALEVALSNIEKRFGKGAVMPLKSVEKVQVETIPTGSLALDIATGVGGIPKGRITEIFGVESSGKTTLALHVIAEAQKRGGVAVFIDAEHALDPKYAKKLGVDVENLYISQPDYGEQALEIAESLINSGAVDVIVVDSVAALVPKDELEGEMGEAQVGKQARLMSQALRKLKGAVHKSNTALIFINQIREKIGVMFGNPETTPGGRALKFFSDMRLEVRRLGDVKEGGEKKGYRVKVRVVKNKLAPPFQEAEFDIIYGEGICKLCDLIEVATNLGIFTKSGSWYSYGDKRLGQGKEQVKKYLQEHPELIDEIDQKVREAAGLAGSNIEESTGEEGK</sequence>
<protein>
    <recommendedName>
        <fullName evidence="1">Protein RecA</fullName>
    </recommendedName>
    <alternativeName>
        <fullName evidence="1">Recombinase A</fullName>
    </alternativeName>
</protein>
<accession>O67905</accession>
<evidence type="ECO:0000255" key="1">
    <source>
        <dbReference type="HAMAP-Rule" id="MF_00268"/>
    </source>
</evidence>
<comment type="function">
    <text evidence="1">Can catalyze the hydrolysis of ATP in the presence of single-stranded DNA, the ATP-dependent uptake of single-stranded DNA by duplex DNA, and the ATP-dependent hybridization of homologous single-stranded DNAs. It interacts with LexA causing its activation and leading to its autocatalytic cleavage.</text>
</comment>
<comment type="subcellular location">
    <subcellularLocation>
        <location evidence="1">Cytoplasm</location>
    </subcellularLocation>
</comment>
<comment type="similarity">
    <text evidence="1">Belongs to the RecA family.</text>
</comment>